<gene>
    <name evidence="1" type="primary">sepF</name>
    <name type="ordered locus">CYA_0861</name>
</gene>
<keyword id="KW-0131">Cell cycle</keyword>
<keyword id="KW-0132">Cell division</keyword>
<keyword id="KW-0963">Cytoplasm</keyword>
<keyword id="KW-0717">Septation</keyword>
<accession>Q2JW12</accession>
<sequence>MEGQEDYQLLYEGRRSQPAPEEQEASALPRGRRQRGVEAGEGSVGREEARGHRRSQHRDRLGGGSMGSNVIGLPGVNPPTSEVVVLEPRSFDEMAQVIQYLRERKTVIMNLTLMDPAEAQRSVDFVAGGTYAIDGHQERIGENIFLFTPSTVTVSTPSSQGMPPLQRPLQSPTPLWPSGYEHLQAVGQH</sequence>
<feature type="chain" id="PRO_0000334127" description="Cell division protein SepF">
    <location>
        <begin position="1"/>
        <end position="189"/>
    </location>
</feature>
<feature type="region of interest" description="Disordered" evidence="2">
    <location>
        <begin position="1"/>
        <end position="75"/>
    </location>
</feature>
<feature type="region of interest" description="Disordered" evidence="2">
    <location>
        <begin position="155"/>
        <end position="174"/>
    </location>
</feature>
<protein>
    <recommendedName>
        <fullName evidence="1">Cell division protein SepF</fullName>
    </recommendedName>
</protein>
<dbReference type="EMBL" id="CP000239">
    <property type="protein sequence ID" value="ABC99065.1"/>
    <property type="molecule type" value="Genomic_DNA"/>
</dbReference>
<dbReference type="RefSeq" id="WP_011429749.1">
    <property type="nucleotide sequence ID" value="NC_007775.1"/>
</dbReference>
<dbReference type="SMR" id="Q2JW12"/>
<dbReference type="STRING" id="321327.CYA_0861"/>
<dbReference type="KEGG" id="cya:CYA_0861"/>
<dbReference type="eggNOG" id="COG1799">
    <property type="taxonomic scope" value="Bacteria"/>
</dbReference>
<dbReference type="HOGENOM" id="CLU_078499_1_1_3"/>
<dbReference type="OrthoDB" id="9815206at2"/>
<dbReference type="Proteomes" id="UP000008818">
    <property type="component" value="Chromosome"/>
</dbReference>
<dbReference type="GO" id="GO:0005737">
    <property type="term" value="C:cytoplasm"/>
    <property type="evidence" value="ECO:0007669"/>
    <property type="project" value="UniProtKB-SubCell"/>
</dbReference>
<dbReference type="GO" id="GO:0000917">
    <property type="term" value="P:division septum assembly"/>
    <property type="evidence" value="ECO:0007669"/>
    <property type="project" value="UniProtKB-KW"/>
</dbReference>
<dbReference type="GO" id="GO:0043093">
    <property type="term" value="P:FtsZ-dependent cytokinesis"/>
    <property type="evidence" value="ECO:0007669"/>
    <property type="project" value="UniProtKB-UniRule"/>
</dbReference>
<dbReference type="Gene3D" id="3.30.110.150">
    <property type="entry name" value="SepF-like protein"/>
    <property type="match status" value="1"/>
</dbReference>
<dbReference type="HAMAP" id="MF_01197">
    <property type="entry name" value="SepF"/>
    <property type="match status" value="1"/>
</dbReference>
<dbReference type="InterPro" id="IPR023052">
    <property type="entry name" value="Cell_div_SepF"/>
</dbReference>
<dbReference type="InterPro" id="IPR007561">
    <property type="entry name" value="Cell_div_SepF/SepF-rel"/>
</dbReference>
<dbReference type="InterPro" id="IPR038594">
    <property type="entry name" value="SepF-like_sf"/>
</dbReference>
<dbReference type="PANTHER" id="PTHR35798">
    <property type="entry name" value="CELL DIVISION PROTEIN SEPF"/>
    <property type="match status" value="1"/>
</dbReference>
<dbReference type="PANTHER" id="PTHR35798:SF1">
    <property type="entry name" value="CELL DIVISION PROTEIN SEPF"/>
    <property type="match status" value="1"/>
</dbReference>
<dbReference type="Pfam" id="PF04472">
    <property type="entry name" value="SepF"/>
    <property type="match status" value="1"/>
</dbReference>
<comment type="function">
    <text evidence="1">Cell division protein that is part of the divisome complex and is recruited early to the Z-ring. Probably stimulates Z-ring formation, perhaps through the cross-linking of FtsZ protofilaments. Its function overlaps with FtsA.</text>
</comment>
<comment type="subunit">
    <text evidence="1">Homodimer. Interacts with FtsZ.</text>
</comment>
<comment type="subcellular location">
    <subcellularLocation>
        <location evidence="1">Cytoplasm</location>
    </subcellularLocation>
    <text evidence="1">Localizes to the division site, in a FtsZ-dependent manner.</text>
</comment>
<comment type="similarity">
    <text evidence="1">Belongs to the SepF family.</text>
</comment>
<evidence type="ECO:0000255" key="1">
    <source>
        <dbReference type="HAMAP-Rule" id="MF_01197"/>
    </source>
</evidence>
<evidence type="ECO:0000256" key="2">
    <source>
        <dbReference type="SAM" id="MobiDB-lite"/>
    </source>
</evidence>
<name>SEPF_SYNJA</name>
<reference key="1">
    <citation type="journal article" date="2007" name="ISME J.">
        <title>Population level functional diversity in a microbial community revealed by comparative genomic and metagenomic analyses.</title>
        <authorList>
            <person name="Bhaya D."/>
            <person name="Grossman A.R."/>
            <person name="Steunou A.-S."/>
            <person name="Khuri N."/>
            <person name="Cohan F.M."/>
            <person name="Hamamura N."/>
            <person name="Melendrez M.C."/>
            <person name="Bateson M.M."/>
            <person name="Ward D.M."/>
            <person name="Heidelberg J.F."/>
        </authorList>
    </citation>
    <scope>NUCLEOTIDE SEQUENCE [LARGE SCALE GENOMIC DNA]</scope>
    <source>
        <strain>JA-3-3Ab</strain>
    </source>
</reference>
<organism>
    <name type="scientific">Synechococcus sp. (strain JA-3-3Ab)</name>
    <name type="common">Cyanobacteria bacterium Yellowstone A-Prime</name>
    <dbReference type="NCBI Taxonomy" id="321327"/>
    <lineage>
        <taxon>Bacteria</taxon>
        <taxon>Bacillati</taxon>
        <taxon>Cyanobacteriota</taxon>
        <taxon>Cyanophyceae</taxon>
        <taxon>Synechococcales</taxon>
        <taxon>Synechococcaceae</taxon>
        <taxon>Synechococcus</taxon>
    </lineage>
</organism>
<proteinExistence type="inferred from homology"/>